<accession>Q9CQC9</accession>
<accession>Q3UBL6</accession>
<proteinExistence type="evidence at protein level"/>
<organism>
    <name type="scientific">Mus musculus</name>
    <name type="common">Mouse</name>
    <dbReference type="NCBI Taxonomy" id="10090"/>
    <lineage>
        <taxon>Eukaryota</taxon>
        <taxon>Metazoa</taxon>
        <taxon>Chordata</taxon>
        <taxon>Craniata</taxon>
        <taxon>Vertebrata</taxon>
        <taxon>Euteleostomi</taxon>
        <taxon>Mammalia</taxon>
        <taxon>Eutheria</taxon>
        <taxon>Euarchontoglires</taxon>
        <taxon>Glires</taxon>
        <taxon>Rodentia</taxon>
        <taxon>Myomorpha</taxon>
        <taxon>Muroidea</taxon>
        <taxon>Muridae</taxon>
        <taxon>Murinae</taxon>
        <taxon>Mus</taxon>
        <taxon>Mus</taxon>
    </lineage>
</organism>
<evidence type="ECO:0000250" key="1">
    <source>
        <dbReference type="UniProtKB" id="Q9QVY3"/>
    </source>
</evidence>
<evidence type="ECO:0000250" key="2">
    <source>
        <dbReference type="UniProtKB" id="Q9Y6B6"/>
    </source>
</evidence>
<evidence type="ECO:0000269" key="3">
    <source>
    </source>
</evidence>
<evidence type="ECO:0000269" key="4">
    <source>
    </source>
</evidence>
<evidence type="ECO:0000269" key="5">
    <source>
    </source>
</evidence>
<evidence type="ECO:0000303" key="6">
    <source>
    </source>
</evidence>
<evidence type="ECO:0000305" key="7"/>
<evidence type="ECO:0000312" key="8">
    <source>
        <dbReference type="MGI" id="MGI:1913647"/>
    </source>
</evidence>
<dbReference type="EC" id="3.6.5.2" evidence="2"/>
<dbReference type="EMBL" id="AK002327">
    <property type="protein sequence ID" value="BAB22015.1"/>
    <property type="molecule type" value="mRNA"/>
</dbReference>
<dbReference type="EMBL" id="AK010187">
    <property type="protein sequence ID" value="BAB26755.1"/>
    <property type="molecule type" value="mRNA"/>
</dbReference>
<dbReference type="EMBL" id="AK013559">
    <property type="protein sequence ID" value="BAB28905.1"/>
    <property type="molecule type" value="mRNA"/>
</dbReference>
<dbReference type="EMBL" id="AK150906">
    <property type="protein sequence ID" value="BAE29948.1"/>
    <property type="molecule type" value="mRNA"/>
</dbReference>
<dbReference type="EMBL" id="BC082550">
    <property type="protein sequence ID" value="AAH82550.1"/>
    <property type="molecule type" value="mRNA"/>
</dbReference>
<dbReference type="CCDS" id="CCDS24661.1"/>
<dbReference type="RefSeq" id="NP_079811.1">
    <property type="nucleotide sequence ID" value="NM_025535.2"/>
</dbReference>
<dbReference type="SMR" id="Q9CQC9"/>
<dbReference type="BioGRID" id="211441">
    <property type="interactions" value="3"/>
</dbReference>
<dbReference type="FunCoup" id="Q9CQC9">
    <property type="interactions" value="2334"/>
</dbReference>
<dbReference type="STRING" id="10090.ENSMUSP00000020653"/>
<dbReference type="GlyGen" id="Q9CQC9">
    <property type="glycosylation" value="1 site, 1 O-linked glycan (1 site)"/>
</dbReference>
<dbReference type="iPTMnet" id="Q9CQC9"/>
<dbReference type="PhosphoSitePlus" id="Q9CQC9"/>
<dbReference type="SwissPalm" id="Q9CQC9"/>
<dbReference type="jPOST" id="Q9CQC9"/>
<dbReference type="PaxDb" id="10090-ENSMUSP00000020653"/>
<dbReference type="ProteomicsDB" id="256704"/>
<dbReference type="Pumba" id="Q9CQC9"/>
<dbReference type="TopDownProteomics" id="Q9CQC9"/>
<dbReference type="Antibodypedia" id="26317">
    <property type="antibodies" value="266 antibodies from 32 providers"/>
</dbReference>
<dbReference type="DNASU" id="66397"/>
<dbReference type="Ensembl" id="ENSMUST00000020653.6">
    <property type="protein sequence ID" value="ENSMUSP00000020653.6"/>
    <property type="gene ID" value="ENSMUSG00000020386.6"/>
</dbReference>
<dbReference type="GeneID" id="66397"/>
<dbReference type="KEGG" id="mmu:66397"/>
<dbReference type="UCSC" id="uc007iup.2">
    <property type="organism name" value="mouse"/>
</dbReference>
<dbReference type="AGR" id="MGI:1913647"/>
<dbReference type="CTD" id="51128"/>
<dbReference type="MGI" id="MGI:1913647">
    <property type="gene designation" value="Sar1b"/>
</dbReference>
<dbReference type="VEuPathDB" id="HostDB:ENSMUSG00000020386"/>
<dbReference type="eggNOG" id="KOG0077">
    <property type="taxonomic scope" value="Eukaryota"/>
</dbReference>
<dbReference type="GeneTree" id="ENSGT00940000160154"/>
<dbReference type="HOGENOM" id="CLU_040729_6_0_1"/>
<dbReference type="InParanoid" id="Q9CQC9"/>
<dbReference type="OMA" id="DCADYER"/>
<dbReference type="OrthoDB" id="15478at2759"/>
<dbReference type="PhylomeDB" id="Q9CQC9"/>
<dbReference type="TreeFam" id="TF312890"/>
<dbReference type="Reactome" id="R-MMU-204005">
    <property type="pathway name" value="COPII-mediated vesicle transport"/>
</dbReference>
<dbReference type="Reactome" id="R-MMU-2132295">
    <property type="pathway name" value="MHC class II antigen presentation"/>
</dbReference>
<dbReference type="Reactome" id="R-MMU-5694530">
    <property type="pathway name" value="Cargo concentration in the ER"/>
</dbReference>
<dbReference type="Reactome" id="R-MMU-8963888">
    <property type="pathway name" value="Chylomicron assembly"/>
</dbReference>
<dbReference type="Reactome" id="R-MMU-983170">
    <property type="pathway name" value="Antigen Presentation: Folding, assembly and peptide loading of class I MHC"/>
</dbReference>
<dbReference type="BioGRID-ORCS" id="66397">
    <property type="hits" value="0 hits in 80 CRISPR screens"/>
</dbReference>
<dbReference type="ChiTaRS" id="Sar1b">
    <property type="organism name" value="mouse"/>
</dbReference>
<dbReference type="PRO" id="PR:Q9CQC9"/>
<dbReference type="Proteomes" id="UP000000589">
    <property type="component" value="Chromosome 11"/>
</dbReference>
<dbReference type="RNAct" id="Q9CQC9">
    <property type="molecule type" value="protein"/>
</dbReference>
<dbReference type="Bgee" id="ENSMUSG00000020386">
    <property type="expression patterns" value="Expressed in triceps brachii and 261 other cell types or tissues"/>
</dbReference>
<dbReference type="ExpressionAtlas" id="Q9CQC9">
    <property type="expression patterns" value="baseline and differential"/>
</dbReference>
<dbReference type="GO" id="GO:0030127">
    <property type="term" value="C:COPII vesicle coat"/>
    <property type="evidence" value="ECO:0000250"/>
    <property type="project" value="UniProtKB"/>
</dbReference>
<dbReference type="GO" id="GO:0005829">
    <property type="term" value="C:cytosol"/>
    <property type="evidence" value="ECO:0007669"/>
    <property type="project" value="UniProtKB-SubCell"/>
</dbReference>
<dbReference type="GO" id="GO:0070971">
    <property type="term" value="C:endoplasmic reticulum exit site"/>
    <property type="evidence" value="ECO:0000250"/>
    <property type="project" value="UniProtKB"/>
</dbReference>
<dbReference type="GO" id="GO:0005789">
    <property type="term" value="C:endoplasmic reticulum membrane"/>
    <property type="evidence" value="ECO:0007669"/>
    <property type="project" value="UniProtKB-SubCell"/>
</dbReference>
<dbReference type="GO" id="GO:0032580">
    <property type="term" value="C:Golgi cisterna membrane"/>
    <property type="evidence" value="ECO:0007669"/>
    <property type="project" value="UniProtKB-SubCell"/>
</dbReference>
<dbReference type="GO" id="GO:0005765">
    <property type="term" value="C:lysosomal membrane"/>
    <property type="evidence" value="ECO:0007669"/>
    <property type="project" value="UniProtKB-SubCell"/>
</dbReference>
<dbReference type="GO" id="GO:0140785">
    <property type="term" value="F:amino acid sensor activity"/>
    <property type="evidence" value="ECO:0007669"/>
    <property type="project" value="Ensembl"/>
</dbReference>
<dbReference type="GO" id="GO:0003925">
    <property type="term" value="F:G protein activity"/>
    <property type="evidence" value="ECO:0000250"/>
    <property type="project" value="UniProtKB"/>
</dbReference>
<dbReference type="GO" id="GO:0005525">
    <property type="term" value="F:GTP binding"/>
    <property type="evidence" value="ECO:0007669"/>
    <property type="project" value="UniProtKB-KW"/>
</dbReference>
<dbReference type="GO" id="GO:0046872">
    <property type="term" value="F:metal ion binding"/>
    <property type="evidence" value="ECO:0007669"/>
    <property type="project" value="UniProtKB-KW"/>
</dbReference>
<dbReference type="GO" id="GO:1990253">
    <property type="term" value="P:cellular response to leucine starvation"/>
    <property type="evidence" value="ECO:0007669"/>
    <property type="project" value="Ensembl"/>
</dbReference>
<dbReference type="GO" id="GO:0048208">
    <property type="term" value="P:COPII vesicle coating"/>
    <property type="evidence" value="ECO:0000250"/>
    <property type="project" value="UniProtKB"/>
</dbReference>
<dbReference type="GO" id="GO:0090110">
    <property type="term" value="P:COPII-coated vesicle cargo loading"/>
    <property type="evidence" value="ECO:0000250"/>
    <property type="project" value="UniProtKB"/>
</dbReference>
<dbReference type="GO" id="GO:0006888">
    <property type="term" value="P:endoplasmic reticulum to Golgi vesicle-mediated transport"/>
    <property type="evidence" value="ECO:0000250"/>
    <property type="project" value="UniProtKB"/>
</dbReference>
<dbReference type="GO" id="GO:0006886">
    <property type="term" value="P:intracellular protein transport"/>
    <property type="evidence" value="ECO:0007669"/>
    <property type="project" value="InterPro"/>
</dbReference>
<dbReference type="GO" id="GO:0140353">
    <property type="term" value="P:lipid export from cell"/>
    <property type="evidence" value="ECO:0000315"/>
    <property type="project" value="UniProtKB"/>
</dbReference>
<dbReference type="GO" id="GO:0055088">
    <property type="term" value="P:lipid homeostasis"/>
    <property type="evidence" value="ECO:0000250"/>
    <property type="project" value="UniProtKB"/>
</dbReference>
<dbReference type="GO" id="GO:0042953">
    <property type="term" value="P:lipoprotein transport"/>
    <property type="evidence" value="ECO:0000315"/>
    <property type="project" value="UniProtKB"/>
</dbReference>
<dbReference type="GO" id="GO:1904262">
    <property type="term" value="P:negative regulation of TORC1 signaling"/>
    <property type="evidence" value="ECO:0007669"/>
    <property type="project" value="Ensembl"/>
</dbReference>
<dbReference type="GO" id="GO:0032368">
    <property type="term" value="P:regulation of lipid transport"/>
    <property type="evidence" value="ECO:0000250"/>
    <property type="project" value="UniProtKB"/>
</dbReference>
<dbReference type="CDD" id="cd00879">
    <property type="entry name" value="Sar1"/>
    <property type="match status" value="1"/>
</dbReference>
<dbReference type="FunFam" id="3.40.50.300:FF:000161">
    <property type="entry name" value="Small COPII coat GTPase"/>
    <property type="match status" value="1"/>
</dbReference>
<dbReference type="Gene3D" id="3.40.50.300">
    <property type="entry name" value="P-loop containing nucleotide triphosphate hydrolases"/>
    <property type="match status" value="1"/>
</dbReference>
<dbReference type="InterPro" id="IPR027417">
    <property type="entry name" value="P-loop_NTPase"/>
</dbReference>
<dbReference type="InterPro" id="IPR005225">
    <property type="entry name" value="Small_GTP-bd"/>
</dbReference>
<dbReference type="InterPro" id="IPR006689">
    <property type="entry name" value="Small_GTPase_ARF/SAR"/>
</dbReference>
<dbReference type="InterPro" id="IPR006687">
    <property type="entry name" value="Small_GTPase_SAR1"/>
</dbReference>
<dbReference type="NCBIfam" id="TIGR00231">
    <property type="entry name" value="small_GTP"/>
    <property type="match status" value="1"/>
</dbReference>
<dbReference type="PANTHER" id="PTHR45684">
    <property type="entry name" value="RE74312P"/>
    <property type="match status" value="1"/>
</dbReference>
<dbReference type="Pfam" id="PF00025">
    <property type="entry name" value="Arf"/>
    <property type="match status" value="1"/>
</dbReference>
<dbReference type="PRINTS" id="PR00328">
    <property type="entry name" value="SAR1GTPBP"/>
</dbReference>
<dbReference type="SMART" id="SM00177">
    <property type="entry name" value="ARF"/>
    <property type="match status" value="1"/>
</dbReference>
<dbReference type="SMART" id="SM00178">
    <property type="entry name" value="SAR"/>
    <property type="match status" value="1"/>
</dbReference>
<dbReference type="SUPFAM" id="SSF52540">
    <property type="entry name" value="P-loop containing nucleoside triphosphate hydrolases"/>
    <property type="match status" value="1"/>
</dbReference>
<dbReference type="PROSITE" id="PS51422">
    <property type="entry name" value="SAR1"/>
    <property type="match status" value="1"/>
</dbReference>
<sequence length="198" mass="22382">MSFIFDWIYSGFSSVLQFLGLYKKSGKLVFLGLDNAGKTTLLHMLKDDRLGQHVPTLHPTSEELTIAGMTFTTFDLGGHVQARRVWKNYLPAINGIVFLVDCADHERLLESKEELDSLMTDETIANVPILILGNKIDRPEAISEERLREMFGLYGQTTGKGSVSLKELNARPLEVFMCSVLKRQGYGEGFRWMAQYID</sequence>
<reference key="1">
    <citation type="journal article" date="2005" name="Science">
        <title>The transcriptional landscape of the mammalian genome.</title>
        <authorList>
            <person name="Carninci P."/>
            <person name="Kasukawa T."/>
            <person name="Katayama S."/>
            <person name="Gough J."/>
            <person name="Frith M.C."/>
            <person name="Maeda N."/>
            <person name="Oyama R."/>
            <person name="Ravasi T."/>
            <person name="Lenhard B."/>
            <person name="Wells C."/>
            <person name="Kodzius R."/>
            <person name="Shimokawa K."/>
            <person name="Bajic V.B."/>
            <person name="Brenner S.E."/>
            <person name="Batalov S."/>
            <person name="Forrest A.R."/>
            <person name="Zavolan M."/>
            <person name="Davis M.J."/>
            <person name="Wilming L.G."/>
            <person name="Aidinis V."/>
            <person name="Allen J.E."/>
            <person name="Ambesi-Impiombato A."/>
            <person name="Apweiler R."/>
            <person name="Aturaliya R.N."/>
            <person name="Bailey T.L."/>
            <person name="Bansal M."/>
            <person name="Baxter L."/>
            <person name="Beisel K.W."/>
            <person name="Bersano T."/>
            <person name="Bono H."/>
            <person name="Chalk A.M."/>
            <person name="Chiu K.P."/>
            <person name="Choudhary V."/>
            <person name="Christoffels A."/>
            <person name="Clutterbuck D.R."/>
            <person name="Crowe M.L."/>
            <person name="Dalla E."/>
            <person name="Dalrymple B.P."/>
            <person name="de Bono B."/>
            <person name="Della Gatta G."/>
            <person name="di Bernardo D."/>
            <person name="Down T."/>
            <person name="Engstrom P."/>
            <person name="Fagiolini M."/>
            <person name="Faulkner G."/>
            <person name="Fletcher C.F."/>
            <person name="Fukushima T."/>
            <person name="Furuno M."/>
            <person name="Futaki S."/>
            <person name="Gariboldi M."/>
            <person name="Georgii-Hemming P."/>
            <person name="Gingeras T.R."/>
            <person name="Gojobori T."/>
            <person name="Green R.E."/>
            <person name="Gustincich S."/>
            <person name="Harbers M."/>
            <person name="Hayashi Y."/>
            <person name="Hensch T.K."/>
            <person name="Hirokawa N."/>
            <person name="Hill D."/>
            <person name="Huminiecki L."/>
            <person name="Iacono M."/>
            <person name="Ikeo K."/>
            <person name="Iwama A."/>
            <person name="Ishikawa T."/>
            <person name="Jakt M."/>
            <person name="Kanapin A."/>
            <person name="Katoh M."/>
            <person name="Kawasawa Y."/>
            <person name="Kelso J."/>
            <person name="Kitamura H."/>
            <person name="Kitano H."/>
            <person name="Kollias G."/>
            <person name="Krishnan S.P."/>
            <person name="Kruger A."/>
            <person name="Kummerfeld S.K."/>
            <person name="Kurochkin I.V."/>
            <person name="Lareau L.F."/>
            <person name="Lazarevic D."/>
            <person name="Lipovich L."/>
            <person name="Liu J."/>
            <person name="Liuni S."/>
            <person name="McWilliam S."/>
            <person name="Madan Babu M."/>
            <person name="Madera M."/>
            <person name="Marchionni L."/>
            <person name="Matsuda H."/>
            <person name="Matsuzawa S."/>
            <person name="Miki H."/>
            <person name="Mignone F."/>
            <person name="Miyake S."/>
            <person name="Morris K."/>
            <person name="Mottagui-Tabar S."/>
            <person name="Mulder N."/>
            <person name="Nakano N."/>
            <person name="Nakauchi H."/>
            <person name="Ng P."/>
            <person name="Nilsson R."/>
            <person name="Nishiguchi S."/>
            <person name="Nishikawa S."/>
            <person name="Nori F."/>
            <person name="Ohara O."/>
            <person name="Okazaki Y."/>
            <person name="Orlando V."/>
            <person name="Pang K.C."/>
            <person name="Pavan W.J."/>
            <person name="Pavesi G."/>
            <person name="Pesole G."/>
            <person name="Petrovsky N."/>
            <person name="Piazza S."/>
            <person name="Reed J."/>
            <person name="Reid J.F."/>
            <person name="Ring B.Z."/>
            <person name="Ringwald M."/>
            <person name="Rost B."/>
            <person name="Ruan Y."/>
            <person name="Salzberg S.L."/>
            <person name="Sandelin A."/>
            <person name="Schneider C."/>
            <person name="Schoenbach C."/>
            <person name="Sekiguchi K."/>
            <person name="Semple C.A."/>
            <person name="Seno S."/>
            <person name="Sessa L."/>
            <person name="Sheng Y."/>
            <person name="Shibata Y."/>
            <person name="Shimada H."/>
            <person name="Shimada K."/>
            <person name="Silva D."/>
            <person name="Sinclair B."/>
            <person name="Sperling S."/>
            <person name="Stupka E."/>
            <person name="Sugiura K."/>
            <person name="Sultana R."/>
            <person name="Takenaka Y."/>
            <person name="Taki K."/>
            <person name="Tammoja K."/>
            <person name="Tan S.L."/>
            <person name="Tang S."/>
            <person name="Taylor M.S."/>
            <person name="Tegner J."/>
            <person name="Teichmann S.A."/>
            <person name="Ueda H.R."/>
            <person name="van Nimwegen E."/>
            <person name="Verardo R."/>
            <person name="Wei C.L."/>
            <person name="Yagi K."/>
            <person name="Yamanishi H."/>
            <person name="Zabarovsky E."/>
            <person name="Zhu S."/>
            <person name="Zimmer A."/>
            <person name="Hide W."/>
            <person name="Bult C."/>
            <person name="Grimmond S.M."/>
            <person name="Teasdale R.D."/>
            <person name="Liu E.T."/>
            <person name="Brusic V."/>
            <person name="Quackenbush J."/>
            <person name="Wahlestedt C."/>
            <person name="Mattick J.S."/>
            <person name="Hume D.A."/>
            <person name="Kai C."/>
            <person name="Sasaki D."/>
            <person name="Tomaru Y."/>
            <person name="Fukuda S."/>
            <person name="Kanamori-Katayama M."/>
            <person name="Suzuki M."/>
            <person name="Aoki J."/>
            <person name="Arakawa T."/>
            <person name="Iida J."/>
            <person name="Imamura K."/>
            <person name="Itoh M."/>
            <person name="Kato T."/>
            <person name="Kawaji H."/>
            <person name="Kawagashira N."/>
            <person name="Kawashima T."/>
            <person name="Kojima M."/>
            <person name="Kondo S."/>
            <person name="Konno H."/>
            <person name="Nakano K."/>
            <person name="Ninomiya N."/>
            <person name="Nishio T."/>
            <person name="Okada M."/>
            <person name="Plessy C."/>
            <person name="Shibata K."/>
            <person name="Shiraki T."/>
            <person name="Suzuki S."/>
            <person name="Tagami M."/>
            <person name="Waki K."/>
            <person name="Watahiki A."/>
            <person name="Okamura-Oho Y."/>
            <person name="Suzuki H."/>
            <person name="Kawai J."/>
            <person name="Hayashizaki Y."/>
        </authorList>
    </citation>
    <scope>NUCLEOTIDE SEQUENCE [LARGE SCALE MRNA]</scope>
    <source>
        <strain>C57BL/6J</strain>
        <tissue>Bone marrow</tissue>
        <tissue>Hippocampus</tissue>
        <tissue>Kidney</tissue>
        <tissue>Tongue</tissue>
    </source>
</reference>
<reference key="2">
    <citation type="journal article" date="2004" name="Genome Res.">
        <title>The status, quality, and expansion of the NIH full-length cDNA project: the Mammalian Gene Collection (MGC).</title>
        <authorList>
            <consortium name="The MGC Project Team"/>
        </authorList>
    </citation>
    <scope>NUCLEOTIDE SEQUENCE [LARGE SCALE MRNA]</scope>
    <source>
        <strain>C57BL/6J</strain>
        <tissue>Brain</tissue>
    </source>
</reference>
<reference key="3">
    <citation type="journal article" date="2001" name="Traffic">
        <title>The mammalian guanine nucleotide exchange factor mSec12 is essential for activation of the Sar1 GTPase directing endoplasmic reticulum export.</title>
        <authorList>
            <person name="Weissman J.T."/>
            <person name="Plutner H."/>
            <person name="Balch W.E."/>
        </authorList>
    </citation>
    <scope>INTERACTION WITH PREB</scope>
    <scope>SUBCELLULAR LOCATION</scope>
</reference>
<reference key="4">
    <citation type="journal article" date="2010" name="Cell">
        <title>A tissue-specific atlas of mouse protein phosphorylation and expression.</title>
        <authorList>
            <person name="Huttlin E.L."/>
            <person name="Jedrychowski M.P."/>
            <person name="Elias J.E."/>
            <person name="Goswami T."/>
            <person name="Rad R."/>
            <person name="Beausoleil S.A."/>
            <person name="Villen J."/>
            <person name="Haas W."/>
            <person name="Sowa M.E."/>
            <person name="Gygi S.P."/>
        </authorList>
    </citation>
    <scope>IDENTIFICATION BY MASS SPECTROMETRY [LARGE SCALE ANALYSIS]</scope>
    <source>
        <tissue>Brain</tissue>
        <tissue>Brown adipose tissue</tissue>
        <tissue>Heart</tissue>
        <tissue>Kidney</tissue>
        <tissue>Liver</tissue>
        <tissue>Lung</tissue>
        <tissue>Pancreas</tissue>
        <tissue>Spleen</tissue>
        <tissue>Testis</tissue>
    </source>
</reference>
<reference key="5">
    <citation type="journal article" date="2021" name="Cell Metab.">
        <title>Receptor-mediated ER export of lipoproteins controls lipid homeostasis in mice and humans.</title>
        <authorList>
            <person name="Wang X."/>
            <person name="Wang H."/>
            <person name="Xu B."/>
            <person name="Huang D."/>
            <person name="Nie C."/>
            <person name="Pu L."/>
            <person name="Zajac G.J.M."/>
            <person name="Yan H."/>
            <person name="Zhao J."/>
            <person name="Shi F."/>
            <person name="Emmer B.T."/>
            <person name="Lu J."/>
            <person name="Wang R."/>
            <person name="Dong X."/>
            <person name="Dai J."/>
            <person name="Zhou W."/>
            <person name="Wang C."/>
            <person name="Gao G."/>
            <person name="Wang Y."/>
            <person name="Willer C."/>
            <person name="Lu X."/>
            <person name="Zhu Y."/>
            <person name="Chen X.W."/>
        </authorList>
    </citation>
    <scope>FUNCTION</scope>
    <scope>DISRUPTION PHENOTYPE</scope>
</reference>
<reference key="6">
    <citation type="journal article" date="2021" name="J. Lipid Res.">
        <title>Sar1b mutant mice recapitulate gastrointestinal abnormalities associated with chylomicron retention disease.</title>
        <authorList>
            <person name="Auclair N."/>
            <person name="Sane A.T."/>
            <person name="Ahmarani L."/>
            <person name="Patey N."/>
            <person name="Beaulieu J.F."/>
            <person name="Peretti N."/>
            <person name="Spahis S."/>
            <person name="Levy E."/>
        </authorList>
    </citation>
    <scope>DISRUPTION PHENOTYPE</scope>
</reference>
<keyword id="KW-0963">Cytoplasm</keyword>
<keyword id="KW-0256">Endoplasmic reticulum</keyword>
<keyword id="KW-0931">ER-Golgi transport</keyword>
<keyword id="KW-0333">Golgi apparatus</keyword>
<keyword id="KW-0342">GTP-binding</keyword>
<keyword id="KW-0378">Hydrolase</keyword>
<keyword id="KW-0458">Lysosome</keyword>
<keyword id="KW-0460">Magnesium</keyword>
<keyword id="KW-0472">Membrane</keyword>
<keyword id="KW-0479">Metal-binding</keyword>
<keyword id="KW-0547">Nucleotide-binding</keyword>
<keyword id="KW-0597">Phosphoprotein</keyword>
<keyword id="KW-0653">Protein transport</keyword>
<keyword id="KW-1185">Reference proteome</keyword>
<keyword id="KW-0813">Transport</keyword>
<comment type="function">
    <text evidence="2 4">Small GTPase that cycles between an active GTP-bound and an inactive GDP-bound state and mainly functions in vesicle-mediated endoplasmic reticulum (ER) to Golgi transport. The active GTP-bound form inserts into the endoplasmic reticulum membrane where it recruits the remainder of the coat protein complex II/COPII. The coat protein complex II assembling and polymerizing on endoplasmic reticulum membrane is responsible for both the sorting of cargos and the deformation and budding of membranes into vesicles destined to the Golgi (By similarity). In contrast to SAR1A, SAR1B specifically interacts with the cargo receptor SURF4 to mediate the transport of lipid-carrying lipoproteins including APOB and APOA1 from the endoplasmic reticulum to the Golgi and thereby, indirectly regulates lipid homeostasis (PubMed:33186557). In addition to its role in vesicle trafficking, can also function as a leucine sensor regulating TORC1 signaling and more indirectly cellular metabolism, growth and survival. In absence of leucine, interacts with the GATOR2 complex via MIOS and inhibits TORC1 signaling. The binding of leucine abrogates the interaction with GATOR2 and the inhibition of the TORC1 signaling. This function is completely independent of the GTPase activity of SAR1B (By similarity).</text>
</comment>
<comment type="catalytic activity">
    <reaction evidence="2">
        <text>GTP + H2O = GDP + phosphate + H(+)</text>
        <dbReference type="Rhea" id="RHEA:19669"/>
        <dbReference type="ChEBI" id="CHEBI:15377"/>
        <dbReference type="ChEBI" id="CHEBI:15378"/>
        <dbReference type="ChEBI" id="CHEBI:37565"/>
        <dbReference type="ChEBI" id="CHEBI:43474"/>
        <dbReference type="ChEBI" id="CHEBI:58189"/>
        <dbReference type="EC" id="3.6.5.2"/>
    </reaction>
    <physiologicalReaction direction="left-to-right" evidence="2">
        <dbReference type="Rhea" id="RHEA:19670"/>
    </physiologicalReaction>
</comment>
<comment type="activity regulation">
    <text evidence="1 2">Small GTPases activation is mediated by guanine exchange factors (GEF), while inactivation through hydrolysis of the bound GTP is stimulated by GTPase activating proteins (GAP) (By similarity). Activated by the guanine nucleotide exchange factor PREB/SEC12 that facilitates the loading of SAR1B with GTP (By similarity). GTP hydrolysis is stimulated by SEC23/24 (By similarity).</text>
</comment>
<comment type="subunit">
    <text evidence="2 3">Homodimer; upon association with membrane. Part of the coat protein complex II/COPII, composed of SEC23/24 and SEC13/31 heterodimers, that it helps recruit and assemble on endoplasmic reticulum (ER) membranes at ER exit site (By similarity). Interacts with PREB; PREB acts as a guanine nucleotide exchange factor facilitating the activation of SAR1B by loading it with GTP (PubMed:11422940). Interacts with SURF4; recruits the cargo receptor SURF4 and its lipoprotein cargos to COPII-coated ER to Golgi transport vesicles. Interacts with MIOS; the interaction is direct, disrupted by the binding of leucine and mediates the interaction of SAR1B with the GATOR2 complex to negatively regulate the TORC1 signaling upon leucine deprivation (By similarity).</text>
</comment>
<comment type="subcellular location">
    <subcellularLocation>
        <location evidence="3">Endoplasmic reticulum membrane</location>
        <topology evidence="3">Peripheral membrane protein</topology>
    </subcellularLocation>
    <subcellularLocation>
        <location evidence="3">Golgi apparatus</location>
        <location evidence="3">Golgi stack membrane</location>
        <topology evidence="3">Peripheral membrane protein</topology>
    </subcellularLocation>
    <subcellularLocation>
        <location evidence="2">Cytoplasm</location>
        <location evidence="2">Cytosol</location>
    </subcellularLocation>
    <subcellularLocation>
        <location evidence="2">Lysosome membrane</location>
    </subcellularLocation>
    <text evidence="2">Active at endoplasmic reticulum exit sites (ERES) where it inserts into the membrane and recruits the remainder of the coat protein complex II/COPII. Upon leucine deprivation, associates with lysosomal membranes to repress TORC1 signaling.</text>
</comment>
<comment type="disruption phenotype">
    <text evidence="4 5">Embryonic lethality during late-gestation (PubMed:33964306). Mice display gastrointestinal abnormalities associated with chylomicron retention disease: they show lower plasma levels of triglycerides, total cholesterol, and HDL-cholesterol, along with reduced chylomicron secretion following gastric lipid gavage (PubMed:33964306). Conditional deletion in the liver depletes plasma lipids (PubMed:33186557).</text>
</comment>
<comment type="similarity">
    <text evidence="7">Belongs to the small GTPase superfamily. SAR1 family.</text>
</comment>
<protein>
    <recommendedName>
        <fullName evidence="2">Small COPII coat GTPase SAR1B</fullName>
        <ecNumber evidence="2">3.6.5.2</ecNumber>
    </recommendedName>
</protein>
<name>SAR1B_MOUSE</name>
<feature type="chain" id="PRO_0000206262" description="Small COPII coat GTPase SAR1B">
    <location>
        <begin position="1"/>
        <end position="198"/>
    </location>
</feature>
<feature type="region of interest" description="Mediates recruitment to ER membranes" evidence="1">
    <location>
        <begin position="15"/>
        <end position="19"/>
    </location>
</feature>
<feature type="short sequence motif" description="STAR; SAR1-N-terminal activation recruitment. Required for the activation by PREB and subsequent recruitment to ER membrane" evidence="1">
    <location>
        <begin position="3"/>
        <end position="5"/>
    </location>
</feature>
<feature type="binding site" evidence="2">
    <location>
        <position position="34"/>
    </location>
    <ligand>
        <name>Mg(2+)</name>
        <dbReference type="ChEBI" id="CHEBI:18420"/>
    </ligand>
</feature>
<feature type="binding site" evidence="2">
    <location>
        <position position="35"/>
    </location>
    <ligand>
        <name>GDP</name>
        <dbReference type="ChEBI" id="CHEBI:58189"/>
    </ligand>
</feature>
<feature type="binding site" evidence="2">
    <location>
        <position position="35"/>
    </location>
    <ligand>
        <name>GTP</name>
        <dbReference type="ChEBI" id="CHEBI:37565"/>
    </ligand>
</feature>
<feature type="binding site" evidence="2">
    <location>
        <position position="36"/>
    </location>
    <ligand>
        <name>GDP</name>
        <dbReference type="ChEBI" id="CHEBI:58189"/>
    </ligand>
</feature>
<feature type="binding site" evidence="2">
    <location>
        <position position="37"/>
    </location>
    <ligand>
        <name>GDP</name>
        <dbReference type="ChEBI" id="CHEBI:58189"/>
    </ligand>
</feature>
<feature type="binding site" evidence="2">
    <location>
        <position position="37"/>
    </location>
    <ligand>
        <name>GTP</name>
        <dbReference type="ChEBI" id="CHEBI:37565"/>
    </ligand>
</feature>
<feature type="binding site" evidence="2">
    <location>
        <position position="38"/>
    </location>
    <ligand>
        <name>GDP</name>
        <dbReference type="ChEBI" id="CHEBI:58189"/>
    </ligand>
</feature>
<feature type="binding site" evidence="2">
    <location>
        <position position="38"/>
    </location>
    <ligand>
        <name>GTP</name>
        <dbReference type="ChEBI" id="CHEBI:37565"/>
    </ligand>
</feature>
<feature type="binding site" evidence="2">
    <location>
        <position position="39"/>
    </location>
    <ligand>
        <name>GDP</name>
        <dbReference type="ChEBI" id="CHEBI:58189"/>
    </ligand>
</feature>
<feature type="binding site" evidence="2">
    <location>
        <position position="39"/>
    </location>
    <ligand>
        <name>GTP</name>
        <dbReference type="ChEBI" id="CHEBI:37565"/>
    </ligand>
</feature>
<feature type="binding site" evidence="2">
    <location>
        <position position="40"/>
    </location>
    <ligand>
        <name>GDP</name>
        <dbReference type="ChEBI" id="CHEBI:58189"/>
    </ligand>
</feature>
<feature type="binding site" evidence="2">
    <location>
        <position position="40"/>
    </location>
    <ligand>
        <name>GTP</name>
        <dbReference type="ChEBI" id="CHEBI:37565"/>
    </ligand>
</feature>
<feature type="binding site" evidence="2">
    <location>
        <position position="58"/>
    </location>
    <ligand>
        <name>GDP</name>
        <dbReference type="ChEBI" id="CHEBI:58189"/>
    </ligand>
</feature>
<feature type="binding site" evidence="2">
    <location>
        <position position="75"/>
    </location>
    <ligand>
        <name>Mg(2+)</name>
        <dbReference type="ChEBI" id="CHEBI:18420"/>
    </ligand>
</feature>
<feature type="binding site" evidence="2">
    <location>
        <position position="134"/>
    </location>
    <ligand>
        <name>GDP</name>
        <dbReference type="ChEBI" id="CHEBI:58189"/>
    </ligand>
</feature>
<feature type="binding site" evidence="2">
    <location>
        <position position="134"/>
    </location>
    <ligand>
        <name>GTP</name>
        <dbReference type="ChEBI" id="CHEBI:37565"/>
    </ligand>
</feature>
<feature type="binding site" evidence="2">
    <location>
        <position position="135"/>
    </location>
    <ligand>
        <name>GDP</name>
        <dbReference type="ChEBI" id="CHEBI:58189"/>
    </ligand>
</feature>
<feature type="binding site" evidence="2">
    <location>
        <position position="135"/>
    </location>
    <ligand>
        <name>GTP</name>
        <dbReference type="ChEBI" id="CHEBI:37565"/>
    </ligand>
</feature>
<feature type="binding site" evidence="2">
    <location>
        <position position="137"/>
    </location>
    <ligand>
        <name>GDP</name>
        <dbReference type="ChEBI" id="CHEBI:58189"/>
    </ligand>
</feature>
<feature type="binding site" evidence="2">
    <location>
        <position position="137"/>
    </location>
    <ligand>
        <name>GTP</name>
        <dbReference type="ChEBI" id="CHEBI:37565"/>
    </ligand>
</feature>
<feature type="binding site" evidence="2">
    <location>
        <position position="180"/>
    </location>
    <ligand>
        <name>GDP</name>
        <dbReference type="ChEBI" id="CHEBI:58189"/>
    </ligand>
</feature>
<feature type="binding site" evidence="2">
    <location>
        <position position="180"/>
    </location>
    <ligand>
        <name>GTP</name>
        <dbReference type="ChEBI" id="CHEBI:37565"/>
    </ligand>
</feature>
<feature type="binding site" evidence="2">
    <location>
        <position position="181"/>
    </location>
    <ligand>
        <name>GDP</name>
        <dbReference type="ChEBI" id="CHEBI:58189"/>
    </ligand>
</feature>
<feature type="binding site" evidence="2">
    <location>
        <position position="181"/>
    </location>
    <ligand>
        <name>GTP</name>
        <dbReference type="ChEBI" id="CHEBI:37565"/>
    </ligand>
</feature>
<feature type="modified residue" description="Phosphoserine" evidence="2">
    <location>
        <position position="164"/>
    </location>
</feature>
<gene>
    <name evidence="6 8" type="primary">Sar1b</name>
    <name type="synonym">Sara1b</name>
    <name type="synonym">Sara2</name>
</gene>